<proteinExistence type="inferred from homology"/>
<name>UTP10_CANGA</name>
<keyword id="KW-0472">Membrane</keyword>
<keyword id="KW-0539">Nucleus</keyword>
<keyword id="KW-1185">Reference proteome</keyword>
<keyword id="KW-0677">Repeat</keyword>
<keyword id="KW-0687">Ribonucleoprotein</keyword>
<keyword id="KW-0690">Ribosome biogenesis</keyword>
<keyword id="KW-0698">rRNA processing</keyword>
<keyword id="KW-0812">Transmembrane</keyword>
<keyword id="KW-1133">Transmembrane helix</keyword>
<dbReference type="EMBL" id="CR380953">
    <property type="protein sequence ID" value="CAG59478.1"/>
    <property type="molecule type" value="Genomic_DNA"/>
</dbReference>
<dbReference type="RefSeq" id="XP_446551.1">
    <property type="nucleotide sequence ID" value="XM_446551.1"/>
</dbReference>
<dbReference type="SMR" id="Q6FT93"/>
<dbReference type="FunCoup" id="Q6FT93">
    <property type="interactions" value="1227"/>
</dbReference>
<dbReference type="STRING" id="284593.Q6FT93"/>
<dbReference type="EnsemblFungi" id="CAGL0G04411g-T">
    <property type="protein sequence ID" value="CAGL0G04411g-T-p1"/>
    <property type="gene ID" value="CAGL0G04411g"/>
</dbReference>
<dbReference type="KEGG" id="cgr:2888167"/>
<dbReference type="CGD" id="CAL0137661">
    <property type="gene designation" value="CAGL0G04411g"/>
</dbReference>
<dbReference type="VEuPathDB" id="FungiDB:CAGL0G04411g"/>
<dbReference type="eggNOG" id="KOG1837">
    <property type="taxonomic scope" value="Eukaryota"/>
</dbReference>
<dbReference type="HOGENOM" id="CLU_001128_3_1_1"/>
<dbReference type="InParanoid" id="Q6FT93"/>
<dbReference type="Proteomes" id="UP000002428">
    <property type="component" value="Chromosome G"/>
</dbReference>
<dbReference type="GO" id="GO:0030686">
    <property type="term" value="C:90S preribosome"/>
    <property type="evidence" value="ECO:0007669"/>
    <property type="project" value="EnsemblFungi"/>
</dbReference>
<dbReference type="GO" id="GO:0016020">
    <property type="term" value="C:membrane"/>
    <property type="evidence" value="ECO:0007669"/>
    <property type="project" value="UniProtKB-SubCell"/>
</dbReference>
<dbReference type="GO" id="GO:0030688">
    <property type="term" value="C:preribosome, small subunit precursor"/>
    <property type="evidence" value="ECO:0007669"/>
    <property type="project" value="EnsemblFungi"/>
</dbReference>
<dbReference type="GO" id="GO:0033553">
    <property type="term" value="C:rDNA heterochromatin"/>
    <property type="evidence" value="ECO:0007669"/>
    <property type="project" value="EnsemblFungi"/>
</dbReference>
<dbReference type="GO" id="GO:0032040">
    <property type="term" value="C:small-subunit processome"/>
    <property type="evidence" value="ECO:0007669"/>
    <property type="project" value="EnsemblFungi"/>
</dbReference>
<dbReference type="GO" id="GO:0034455">
    <property type="term" value="C:t-UTP complex"/>
    <property type="evidence" value="ECO:0007669"/>
    <property type="project" value="EnsemblFungi"/>
</dbReference>
<dbReference type="GO" id="GO:0034511">
    <property type="term" value="F:U3 snoRNA binding"/>
    <property type="evidence" value="ECO:0007669"/>
    <property type="project" value="EnsemblFungi"/>
</dbReference>
<dbReference type="GO" id="GO:0000480">
    <property type="term" value="P:endonucleolytic cleavage in 5'-ETS of tricistronic rRNA transcript (SSU-rRNA, 5.8S rRNA, LSU-rRNA)"/>
    <property type="evidence" value="ECO:0007669"/>
    <property type="project" value="EnsemblFungi"/>
</dbReference>
<dbReference type="GO" id="GO:0000447">
    <property type="term" value="P:endonucleolytic cleavage in ITS1 to separate SSU-rRNA from 5.8S rRNA and LSU-rRNA from tricistronic rRNA transcript (SSU-rRNA, 5.8S rRNA, LSU-rRNA)"/>
    <property type="evidence" value="ECO:0007669"/>
    <property type="project" value="EnsemblFungi"/>
</dbReference>
<dbReference type="GO" id="GO:0000472">
    <property type="term" value="P:endonucleolytic cleavage to generate mature 5'-end of SSU-rRNA from (SSU-rRNA, 5.8S rRNA, LSU-rRNA)"/>
    <property type="evidence" value="ECO:0007669"/>
    <property type="project" value="EnsemblFungi"/>
</dbReference>
<dbReference type="GO" id="GO:0045943">
    <property type="term" value="P:positive regulation of transcription by RNA polymerase I"/>
    <property type="evidence" value="ECO:0007669"/>
    <property type="project" value="EnsemblFungi"/>
</dbReference>
<dbReference type="FunFam" id="1.25.10.10:FF:000530">
    <property type="entry name" value="UTP10p Nucleolar protein"/>
    <property type="match status" value="1"/>
</dbReference>
<dbReference type="Gene3D" id="1.25.10.10">
    <property type="entry name" value="Leucine-rich Repeat Variant"/>
    <property type="match status" value="1"/>
</dbReference>
<dbReference type="InterPro" id="IPR011989">
    <property type="entry name" value="ARM-like"/>
</dbReference>
<dbReference type="InterPro" id="IPR016024">
    <property type="entry name" value="ARM-type_fold"/>
</dbReference>
<dbReference type="InterPro" id="IPR012954">
    <property type="entry name" value="BP28_C_dom"/>
</dbReference>
<dbReference type="InterPro" id="IPR021133">
    <property type="entry name" value="HEAT_type_2"/>
</dbReference>
<dbReference type="InterPro" id="IPR056473">
    <property type="entry name" value="HEAT_Utp10/HEAT1"/>
</dbReference>
<dbReference type="InterPro" id="IPR022125">
    <property type="entry name" value="U3snoRNP10_N"/>
</dbReference>
<dbReference type="InterPro" id="IPR040191">
    <property type="entry name" value="UTP10"/>
</dbReference>
<dbReference type="PANTHER" id="PTHR13457">
    <property type="entry name" value="BAP28"/>
    <property type="match status" value="1"/>
</dbReference>
<dbReference type="PANTHER" id="PTHR13457:SF1">
    <property type="entry name" value="HEAT REPEAT-CONTAINING PROTEIN 1"/>
    <property type="match status" value="1"/>
</dbReference>
<dbReference type="Pfam" id="PF08146">
    <property type="entry name" value="BP28CT"/>
    <property type="match status" value="1"/>
</dbReference>
<dbReference type="Pfam" id="PF23243">
    <property type="entry name" value="HEAT_HEATR1"/>
    <property type="match status" value="1"/>
</dbReference>
<dbReference type="Pfam" id="PF12397">
    <property type="entry name" value="U3snoRNP10"/>
    <property type="match status" value="1"/>
</dbReference>
<dbReference type="SMART" id="SM01036">
    <property type="entry name" value="BP28CT"/>
    <property type="match status" value="1"/>
</dbReference>
<dbReference type="SUPFAM" id="SSF48371">
    <property type="entry name" value="ARM repeat"/>
    <property type="match status" value="2"/>
</dbReference>
<dbReference type="PROSITE" id="PS50077">
    <property type="entry name" value="HEAT_REPEAT"/>
    <property type="match status" value="1"/>
</dbReference>
<comment type="function">
    <text evidence="1">Involved in nucleolar processing of pre-18S ribosomal RNA. Involved in ribosome biosynthesis (By similarity).</text>
</comment>
<comment type="subunit">
    <text evidence="1">Component of the ribosomal small subunit (SSU) processome.</text>
</comment>
<comment type="subcellular location">
    <subcellularLocation>
        <location evidence="1 2">Nucleus</location>
        <location evidence="1 2">Nucleolus</location>
    </subcellularLocation>
    <subcellularLocation>
        <location evidence="2">Membrane</location>
        <topology evidence="2">Multi-pass membrane protein</topology>
    </subcellularLocation>
</comment>
<comment type="similarity">
    <text evidence="3">Belongs to the HEATR1/UTP10 family.</text>
</comment>
<reference evidence="4" key="1">
    <citation type="journal article" date="2004" name="Nature">
        <title>Genome evolution in yeasts.</title>
        <authorList>
            <person name="Dujon B."/>
            <person name="Sherman D."/>
            <person name="Fischer G."/>
            <person name="Durrens P."/>
            <person name="Casaregola S."/>
            <person name="Lafontaine I."/>
            <person name="de Montigny J."/>
            <person name="Marck C."/>
            <person name="Neuveglise C."/>
            <person name="Talla E."/>
            <person name="Goffard N."/>
            <person name="Frangeul L."/>
            <person name="Aigle M."/>
            <person name="Anthouard V."/>
            <person name="Babour A."/>
            <person name="Barbe V."/>
            <person name="Barnay S."/>
            <person name="Blanchin S."/>
            <person name="Beckerich J.-M."/>
            <person name="Beyne E."/>
            <person name="Bleykasten C."/>
            <person name="Boisrame A."/>
            <person name="Boyer J."/>
            <person name="Cattolico L."/>
            <person name="Confanioleri F."/>
            <person name="de Daruvar A."/>
            <person name="Despons L."/>
            <person name="Fabre E."/>
            <person name="Fairhead C."/>
            <person name="Ferry-Dumazet H."/>
            <person name="Groppi A."/>
            <person name="Hantraye F."/>
            <person name="Hennequin C."/>
            <person name="Jauniaux N."/>
            <person name="Joyet P."/>
            <person name="Kachouri R."/>
            <person name="Kerrest A."/>
            <person name="Koszul R."/>
            <person name="Lemaire M."/>
            <person name="Lesur I."/>
            <person name="Ma L."/>
            <person name="Muller H."/>
            <person name="Nicaud J.-M."/>
            <person name="Nikolski M."/>
            <person name="Oztas S."/>
            <person name="Ozier-Kalogeropoulos O."/>
            <person name="Pellenz S."/>
            <person name="Potier S."/>
            <person name="Richard G.-F."/>
            <person name="Straub M.-L."/>
            <person name="Suleau A."/>
            <person name="Swennen D."/>
            <person name="Tekaia F."/>
            <person name="Wesolowski-Louvel M."/>
            <person name="Westhof E."/>
            <person name="Wirth B."/>
            <person name="Zeniou-Meyer M."/>
            <person name="Zivanovic Y."/>
            <person name="Bolotin-Fukuhara M."/>
            <person name="Thierry A."/>
            <person name="Bouchier C."/>
            <person name="Caudron B."/>
            <person name="Scarpelli C."/>
            <person name="Gaillardin C."/>
            <person name="Weissenbach J."/>
            <person name="Wincker P."/>
            <person name="Souciet J.-L."/>
        </authorList>
    </citation>
    <scope>NUCLEOTIDE SEQUENCE [LARGE SCALE GENOMIC DNA]</scope>
    <source>
        <strain>ATCC 2001 / BCRC 20586 / JCM 3761 / NBRC 0622 / NRRL Y-65 / CBS 138</strain>
    </source>
</reference>
<gene>
    <name evidence="1" type="primary">UTP10</name>
    <name type="ordered locus">CAGL0G04411g</name>
</gene>
<evidence type="ECO:0000250" key="1">
    <source>
        <dbReference type="UniProtKB" id="P42945"/>
    </source>
</evidence>
<evidence type="ECO:0000255" key="2"/>
<evidence type="ECO:0000305" key="3"/>
<evidence type="ECO:0000312" key="4">
    <source>
        <dbReference type="EMBL" id="CAG59478.1"/>
    </source>
</evidence>
<accession>Q6FT93</accession>
<organism>
    <name type="scientific">Candida glabrata (strain ATCC 2001 / BCRC 20586 / JCM 3761 / NBRC 0622 / NRRL Y-65 / CBS 138)</name>
    <name type="common">Yeast</name>
    <name type="synonym">Nakaseomyces glabratus</name>
    <dbReference type="NCBI Taxonomy" id="284593"/>
    <lineage>
        <taxon>Eukaryota</taxon>
        <taxon>Fungi</taxon>
        <taxon>Dikarya</taxon>
        <taxon>Ascomycota</taxon>
        <taxon>Saccharomycotina</taxon>
        <taxon>Saccharomycetes</taxon>
        <taxon>Saccharomycetales</taxon>
        <taxon>Saccharomycetaceae</taxon>
        <taxon>Nakaseomyces</taxon>
    </lineage>
</organism>
<sequence length="1770" mass="200909">MSSLSDQLAQVAASNASVAFDRKKRQKLHSASLIYNPKTAATQDYETIFENALGALQELCDIEPRFQVFSKTLFSETSITIDRNVQSKEENKNLDNAINAYLLMVSSKWHLAPALHATEWLVRRFQIHVHNTEILLLSTLNYYQSPIFKRILNIVKLPALFQPLSNFVKNDSNPTNITIIKMFNDTDFLKLYSNYLSKCIKHKSTYTNQLLFVTCCFINLIAFNSSNDEKLEFLVPIILEIAAKLLASGSTDCQIAAHTILIVFTAALPLKKDIVVAAIETILANLKDKKAEQSAFWAVIKISQTLKGQQAIEHLPANIYKIFDKHYTWVRVLDLLTEEPSIKCDKFMTSYIRAMIRFDHSKLDMVVPLVQKLSLEKYEFRSIVIDLIHLSEVLEDKSKLIDLFEFLVKENESLVINCLSSLNLTGEMFEIRLTTSLFSKTNDDNELELLKTLNSHKNTSSDKKEETKPFKQFLEENSEFIVTSNKSMISEDDEKFNKILGLFIEAIGTGYQAGLFLSSFMTTLEARLTFLLRVIVSPSAPIALRLLAMNNISKYIQSIDKELNLFTLIPFLLVAQSGSSKNLKISVKKILGQIGNRPFTKHYFMSNQLYGEGKDIKVPSPSDSEMWTKNFIENYVVENVDISGVFIPKQAEKVFLLFWAQQVLDIPLPYPQYMILNFLGKYVPNTASYSGLFEESISSYLERREELLLRCALNKTDPIQFETAMVNLISNKEKHHFMLDFIINVLQSDYEDLIQILVDRLVEVFATFKTSNQLRIVQEILQSVTKEDQIYDALGTLQSLQIDPDTFVCIFKENSINSESDVTSFPKRRRRRSSTNKAALQSAEVSQIAEDHLKKLTIMLETLDKQKVKGSEELLSSLFFTLADFETLDQDGGLPVLYAEELLASAMLNTIRSLKDQGLTQLQNVRADIIVSAIRTSSSPQVQNKLLLVIGELATLSSEIVLHSVMPIFTFMGAHSVRQDDEFTTQVVEKTILTVVPAFLAANSENITEEIEFLVMSFATALQHIPKHRRLRLFTTLVQALGSDNSLGPLLLLISQQYSNAVKSFKISESRSLVEFTKLLLSKFEVQEQITGFRKFLELYEKLLLANKNPEKKVTLETQALFSSKILNLTQSEFCDLTNNSYDFLTKVIVDTNDDYYDSSRNFKIRLYSIILDPTVSNATRKALDESYSSVLKMILSLIADYPDIFVFETNENSEKQNSVHFIGDILEEIKQSLYGLLHAILDVLPINVFLTTTVPLLESSIDKEIRYHIASNIFDKFENETVDDHELTQSVVHTLNEKIPQEENNVAQVLLNLQSSLINKYGSFFDNNLLVEVLNLASGLISTGPRELQISSIAVITNCVSVMGVKFISFYPKVVPICIKLFNETRASKEELAPQLQLSILLLFTALVKSIPSFLTSDLISLMKLIFFSSGVEVTTRLSVIQLVTEKLDLKNVLGTLLKVWNSEVKESGDSTAISLFLSLLEGTVEKIEKKSATSQSPLFFKLLICLFEFRSQSEFDTNTISRIESSVYAVANTYVLKLNDKVFRPLFVILIKWAFDGEGVSSESITEKERLTAFFKFFNRLQENLKGIITSYFTYLIEPVNELLKRFISGDISDVNLRRLLLNSLTSSLKYDRDEYWQSTSRFELICPSLVNQLSNIEPTIGKYLVKAIGSLAAKNSSVDEHNQMMNKLLVEHMKATCSSNEKLWAVRTVKLIYSKVGESWLVLLPQMVPIIAELLEDDNEEVESEVRGGLVRVMENVLGEPFDRYLD</sequence>
<protein>
    <recommendedName>
        <fullName>U3 small nucleolar RNA-associated protein 10</fullName>
    </recommendedName>
</protein>
<feature type="chain" id="PRO_0000308499" description="U3 small nucleolar RNA-associated protein 10">
    <location>
        <begin position="1"/>
        <end position="1770"/>
    </location>
</feature>
<feature type="transmembrane region" description="Helical" evidence="2">
    <location>
        <begin position="499"/>
        <end position="519"/>
    </location>
</feature>
<feature type="transmembrane region" description="Helical" evidence="2">
    <location>
        <begin position="528"/>
        <end position="548"/>
    </location>
</feature>
<feature type="repeat" description="HEAT" evidence="2">
    <location>
        <begin position="1730"/>
        <end position="1768"/>
    </location>
</feature>